<proteinExistence type="inferred from homology"/>
<name>THIE_SYNS3</name>
<protein>
    <recommendedName>
        <fullName evidence="1">Thiamine-phosphate synthase</fullName>
        <shortName evidence="1">TP synthase</shortName>
        <shortName evidence="1">TPS</shortName>
        <ecNumber evidence="1">2.5.1.3</ecNumber>
    </recommendedName>
    <alternativeName>
        <fullName evidence="1">Thiamine-phosphate pyrophosphorylase</fullName>
        <shortName evidence="1">TMP pyrophosphorylase</shortName>
        <shortName evidence="1">TMP-PPase</shortName>
    </alternativeName>
</protein>
<dbReference type="EC" id="2.5.1.3" evidence="1"/>
<dbReference type="EMBL" id="CP000435">
    <property type="protein sequence ID" value="ABI45071.1"/>
    <property type="status" value="ALT_INIT"/>
    <property type="molecule type" value="Genomic_DNA"/>
</dbReference>
<dbReference type="RefSeq" id="WP_041426911.1">
    <property type="nucleotide sequence ID" value="NC_008319.1"/>
</dbReference>
<dbReference type="SMR" id="Q0IC17"/>
<dbReference type="STRING" id="64471.sync_0791"/>
<dbReference type="KEGG" id="syg:sync_0791"/>
<dbReference type="eggNOG" id="COG0352">
    <property type="taxonomic scope" value="Bacteria"/>
</dbReference>
<dbReference type="HOGENOM" id="CLU_064900_0_0_3"/>
<dbReference type="OrthoDB" id="9812206at2"/>
<dbReference type="UniPathway" id="UPA00060">
    <property type="reaction ID" value="UER00141"/>
</dbReference>
<dbReference type="Proteomes" id="UP000001961">
    <property type="component" value="Chromosome"/>
</dbReference>
<dbReference type="GO" id="GO:0005737">
    <property type="term" value="C:cytoplasm"/>
    <property type="evidence" value="ECO:0007669"/>
    <property type="project" value="TreeGrafter"/>
</dbReference>
<dbReference type="GO" id="GO:0000287">
    <property type="term" value="F:magnesium ion binding"/>
    <property type="evidence" value="ECO:0007669"/>
    <property type="project" value="UniProtKB-UniRule"/>
</dbReference>
<dbReference type="GO" id="GO:0004789">
    <property type="term" value="F:thiamine-phosphate diphosphorylase activity"/>
    <property type="evidence" value="ECO:0007669"/>
    <property type="project" value="UniProtKB-UniRule"/>
</dbReference>
<dbReference type="GO" id="GO:0009228">
    <property type="term" value="P:thiamine biosynthetic process"/>
    <property type="evidence" value="ECO:0007669"/>
    <property type="project" value="UniProtKB-KW"/>
</dbReference>
<dbReference type="GO" id="GO:0009229">
    <property type="term" value="P:thiamine diphosphate biosynthetic process"/>
    <property type="evidence" value="ECO:0007669"/>
    <property type="project" value="UniProtKB-UniRule"/>
</dbReference>
<dbReference type="CDD" id="cd00564">
    <property type="entry name" value="TMP_TenI"/>
    <property type="match status" value="1"/>
</dbReference>
<dbReference type="FunFam" id="3.20.20.70:FF:000096">
    <property type="entry name" value="Thiamine-phosphate synthase"/>
    <property type="match status" value="1"/>
</dbReference>
<dbReference type="Gene3D" id="3.20.20.70">
    <property type="entry name" value="Aldolase class I"/>
    <property type="match status" value="1"/>
</dbReference>
<dbReference type="HAMAP" id="MF_00097">
    <property type="entry name" value="TMP_synthase"/>
    <property type="match status" value="1"/>
</dbReference>
<dbReference type="HAMAP" id="MF_01327">
    <property type="entry name" value="TMP_synthase_cyanobact"/>
    <property type="match status" value="1"/>
</dbReference>
<dbReference type="InterPro" id="IPR013785">
    <property type="entry name" value="Aldolase_TIM"/>
</dbReference>
<dbReference type="InterPro" id="IPR036206">
    <property type="entry name" value="ThiamineP_synth_sf"/>
</dbReference>
<dbReference type="InterPro" id="IPR022998">
    <property type="entry name" value="ThiamineP_synth_TenI"/>
</dbReference>
<dbReference type="InterPro" id="IPR041397">
    <property type="entry name" value="ThiD2"/>
</dbReference>
<dbReference type="InterPro" id="IPR034291">
    <property type="entry name" value="TMP_synthase"/>
</dbReference>
<dbReference type="InterPro" id="IPR016229">
    <property type="entry name" value="TMP_synthase_cyanobac_bac"/>
</dbReference>
<dbReference type="NCBIfam" id="NF002727">
    <property type="entry name" value="PRK02615.1"/>
    <property type="match status" value="1"/>
</dbReference>
<dbReference type="NCBIfam" id="TIGR00693">
    <property type="entry name" value="thiE"/>
    <property type="match status" value="1"/>
</dbReference>
<dbReference type="PANTHER" id="PTHR20857">
    <property type="entry name" value="THIAMINE-PHOSPHATE PYROPHOSPHORYLASE"/>
    <property type="match status" value="1"/>
</dbReference>
<dbReference type="PANTHER" id="PTHR20857:SF15">
    <property type="entry name" value="THIAMINE-PHOSPHATE SYNTHASE"/>
    <property type="match status" value="1"/>
</dbReference>
<dbReference type="Pfam" id="PF17792">
    <property type="entry name" value="ThiD2"/>
    <property type="match status" value="1"/>
</dbReference>
<dbReference type="Pfam" id="PF02581">
    <property type="entry name" value="TMP-TENI"/>
    <property type="match status" value="1"/>
</dbReference>
<dbReference type="PIRSF" id="PIRSF000512">
    <property type="entry name" value="TMP_PPase_Cyanobac_prd"/>
    <property type="match status" value="1"/>
</dbReference>
<dbReference type="SUPFAM" id="SSF51391">
    <property type="entry name" value="Thiamin phosphate synthase"/>
    <property type="match status" value="1"/>
</dbReference>
<reference key="1">
    <citation type="journal article" date="2006" name="Proc. Natl. Acad. Sci. U.S.A.">
        <title>Genome sequence of Synechococcus CC9311: insights into adaptation to a coastal environment.</title>
        <authorList>
            <person name="Palenik B."/>
            <person name="Ren Q."/>
            <person name="Dupont C.L."/>
            <person name="Myers G.S."/>
            <person name="Heidelberg J.F."/>
            <person name="Badger J.H."/>
            <person name="Madupu R."/>
            <person name="Nelson W.C."/>
            <person name="Brinkac L.M."/>
            <person name="Dodson R.J."/>
            <person name="Durkin A.S."/>
            <person name="Daugherty S.C."/>
            <person name="Sullivan S.A."/>
            <person name="Khouri H."/>
            <person name="Mohamoud Y."/>
            <person name="Halpin R."/>
            <person name="Paulsen I.T."/>
        </authorList>
    </citation>
    <scope>NUCLEOTIDE SEQUENCE [LARGE SCALE GENOMIC DNA]</scope>
    <source>
        <strain>CC9311</strain>
    </source>
</reference>
<keyword id="KW-0460">Magnesium</keyword>
<keyword id="KW-0479">Metal-binding</keyword>
<keyword id="KW-1185">Reference proteome</keyword>
<keyword id="KW-0784">Thiamine biosynthesis</keyword>
<keyword id="KW-0808">Transferase</keyword>
<organism>
    <name type="scientific">Synechococcus sp. (strain CC9311)</name>
    <dbReference type="NCBI Taxonomy" id="64471"/>
    <lineage>
        <taxon>Bacteria</taxon>
        <taxon>Bacillati</taxon>
        <taxon>Cyanobacteriota</taxon>
        <taxon>Cyanophyceae</taxon>
        <taxon>Synechococcales</taxon>
        <taxon>Synechococcaceae</taxon>
        <taxon>Synechococcus</taxon>
    </lineage>
</organism>
<accession>Q0IC17</accession>
<gene>
    <name evidence="1" type="primary">thiE</name>
    <name type="ordered locus">sync_0791</name>
</gene>
<sequence>MELMVVEADAKLRVARLIDANLDRAREGLRVIEDWCRFGLDRDDLVLPLKDWRQRLGQQHHDRYRRARSTATDVAAGLGHPAQTSRCSAPAIIKANASRVQEALRVLEEFGRNLDPDLASTAAEIRYGLYDLEVRILEACGRQHRQERLEGAKLCLITDPDRDNNLERLLHGVEAALMAGVSLVQYRRKQGNDKQRLLEAQALKTLCSRFEALFIVNDRIDLALLVDADGVHLGQDDLPLSEARQLLGPERLLGRSTHRLEHLLEAQQAGADYLGVGPVFATKTKRDLSPAGLSWVTEASRHAAVPWFAIGGIDIETIPSVRAAGAQRVAVVSAIMSSNDPEEASRTLLQTLA</sequence>
<feature type="chain" id="PRO_0000415379" description="Thiamine-phosphate synthase">
    <location>
        <begin position="1"/>
        <end position="353"/>
    </location>
</feature>
<feature type="region of interest" description="Unknown">
    <location>
        <begin position="1"/>
        <end position="128"/>
    </location>
</feature>
<feature type="region of interest" description="Thiamine-phosphate synthase">
    <location>
        <begin position="129"/>
        <end position="353"/>
    </location>
</feature>
<feature type="binding site" evidence="1">
    <location>
        <begin position="185"/>
        <end position="189"/>
    </location>
    <ligand>
        <name>4-amino-2-methyl-5-(diphosphooxymethyl)pyrimidine</name>
        <dbReference type="ChEBI" id="CHEBI:57841"/>
    </ligand>
</feature>
<feature type="binding site" evidence="1">
    <location>
        <position position="217"/>
    </location>
    <ligand>
        <name>4-amino-2-methyl-5-(diphosphooxymethyl)pyrimidine</name>
        <dbReference type="ChEBI" id="CHEBI:57841"/>
    </ligand>
</feature>
<feature type="binding site" evidence="1">
    <location>
        <position position="218"/>
    </location>
    <ligand>
        <name>Mg(2+)</name>
        <dbReference type="ChEBI" id="CHEBI:18420"/>
    </ligand>
</feature>
<feature type="binding site" evidence="1">
    <location>
        <position position="237"/>
    </location>
    <ligand>
        <name>Mg(2+)</name>
        <dbReference type="ChEBI" id="CHEBI:18420"/>
    </ligand>
</feature>
<feature type="binding site" evidence="1">
    <location>
        <position position="256"/>
    </location>
    <ligand>
        <name>4-amino-2-methyl-5-(diphosphooxymethyl)pyrimidine</name>
        <dbReference type="ChEBI" id="CHEBI:57841"/>
    </ligand>
</feature>
<feature type="binding site" evidence="1">
    <location>
        <begin position="282"/>
        <end position="284"/>
    </location>
    <ligand>
        <name>2-[(2R,5Z)-2-carboxy-4-methylthiazol-5(2H)-ylidene]ethyl phosphate</name>
        <dbReference type="ChEBI" id="CHEBI:62899"/>
    </ligand>
</feature>
<feature type="binding site" evidence="1">
    <location>
        <position position="285"/>
    </location>
    <ligand>
        <name>4-amino-2-methyl-5-(diphosphooxymethyl)pyrimidine</name>
        <dbReference type="ChEBI" id="CHEBI:57841"/>
    </ligand>
</feature>
<feature type="binding site" evidence="1">
    <location>
        <position position="312"/>
    </location>
    <ligand>
        <name>2-[(2R,5Z)-2-carboxy-4-methylthiazol-5(2H)-ylidene]ethyl phosphate</name>
        <dbReference type="ChEBI" id="CHEBI:62899"/>
    </ligand>
</feature>
<comment type="function">
    <text evidence="1">Condenses 4-methyl-5-(beta-hydroxyethyl)thiazole monophosphate (THZ-P) and 2-methyl-4-amino-5-hydroxymethyl pyrimidine pyrophosphate (HMP-PP) to form thiamine monophosphate (TMP).</text>
</comment>
<comment type="catalytic activity">
    <reaction evidence="1">
        <text>2-[(2R,5Z)-2-carboxy-4-methylthiazol-5(2H)-ylidene]ethyl phosphate + 4-amino-2-methyl-5-(diphosphooxymethyl)pyrimidine + 2 H(+) = thiamine phosphate + CO2 + diphosphate</text>
        <dbReference type="Rhea" id="RHEA:47844"/>
        <dbReference type="ChEBI" id="CHEBI:15378"/>
        <dbReference type="ChEBI" id="CHEBI:16526"/>
        <dbReference type="ChEBI" id="CHEBI:33019"/>
        <dbReference type="ChEBI" id="CHEBI:37575"/>
        <dbReference type="ChEBI" id="CHEBI:57841"/>
        <dbReference type="ChEBI" id="CHEBI:62899"/>
        <dbReference type="EC" id="2.5.1.3"/>
    </reaction>
</comment>
<comment type="catalytic activity">
    <reaction evidence="1">
        <text>2-(2-carboxy-4-methylthiazol-5-yl)ethyl phosphate + 4-amino-2-methyl-5-(diphosphooxymethyl)pyrimidine + 2 H(+) = thiamine phosphate + CO2 + diphosphate</text>
        <dbReference type="Rhea" id="RHEA:47848"/>
        <dbReference type="ChEBI" id="CHEBI:15378"/>
        <dbReference type="ChEBI" id="CHEBI:16526"/>
        <dbReference type="ChEBI" id="CHEBI:33019"/>
        <dbReference type="ChEBI" id="CHEBI:37575"/>
        <dbReference type="ChEBI" id="CHEBI:57841"/>
        <dbReference type="ChEBI" id="CHEBI:62890"/>
        <dbReference type="EC" id="2.5.1.3"/>
    </reaction>
</comment>
<comment type="catalytic activity">
    <reaction evidence="1">
        <text>4-methyl-5-(2-phosphooxyethyl)-thiazole + 4-amino-2-methyl-5-(diphosphooxymethyl)pyrimidine + H(+) = thiamine phosphate + diphosphate</text>
        <dbReference type="Rhea" id="RHEA:22328"/>
        <dbReference type="ChEBI" id="CHEBI:15378"/>
        <dbReference type="ChEBI" id="CHEBI:33019"/>
        <dbReference type="ChEBI" id="CHEBI:37575"/>
        <dbReference type="ChEBI" id="CHEBI:57841"/>
        <dbReference type="ChEBI" id="CHEBI:58296"/>
        <dbReference type="EC" id="2.5.1.3"/>
    </reaction>
</comment>
<comment type="cofactor">
    <cofactor evidence="1">
        <name>Mg(2+)</name>
        <dbReference type="ChEBI" id="CHEBI:18420"/>
    </cofactor>
    <text evidence="1">Binds 1 Mg(2+) ion per subunit.</text>
</comment>
<comment type="pathway">
    <text evidence="1">Cofactor biosynthesis; thiamine diphosphate biosynthesis; thiamine phosphate from 4-amino-2-methyl-5-diphosphomethylpyrimidine and 4-methyl-5-(2-phosphoethyl)-thiazole: step 1/1.</text>
</comment>
<comment type="similarity">
    <text evidence="1">Belongs to the thiamine-phosphate synthase family.</text>
</comment>
<comment type="sequence caution" evidence="2">
    <conflict type="erroneous initiation">
        <sequence resource="EMBL-CDS" id="ABI45071"/>
    </conflict>
    <text>Truncated N-terminus.</text>
</comment>
<evidence type="ECO:0000255" key="1">
    <source>
        <dbReference type="HAMAP-Rule" id="MF_01327"/>
    </source>
</evidence>
<evidence type="ECO:0000305" key="2"/>